<accession>A4IJM1</accession>
<protein>
    <recommendedName>
        <fullName evidence="1">Small ribosomal subunit protein uS9</fullName>
    </recommendedName>
    <alternativeName>
        <fullName evidence="2">30S ribosomal protein S9</fullName>
    </alternativeName>
</protein>
<comment type="similarity">
    <text evidence="1">Belongs to the universal ribosomal protein uS9 family.</text>
</comment>
<feature type="chain" id="PRO_1000051224" description="Small ribosomal subunit protein uS9">
    <location>
        <begin position="1"/>
        <end position="130"/>
    </location>
</feature>
<reference key="1">
    <citation type="journal article" date="2007" name="Proc. Natl. Acad. Sci. U.S.A.">
        <title>Genome and proteome of long-chain alkane degrading Geobacillus thermodenitrificans NG80-2 isolated from a deep-subsurface oil reservoir.</title>
        <authorList>
            <person name="Feng L."/>
            <person name="Wang W."/>
            <person name="Cheng J."/>
            <person name="Ren Y."/>
            <person name="Zhao G."/>
            <person name="Gao C."/>
            <person name="Tang Y."/>
            <person name="Liu X."/>
            <person name="Han W."/>
            <person name="Peng X."/>
            <person name="Liu R."/>
            <person name="Wang L."/>
        </authorList>
    </citation>
    <scope>NUCLEOTIDE SEQUENCE [LARGE SCALE GENOMIC DNA]</scope>
    <source>
        <strain>NG80-2</strain>
    </source>
</reference>
<name>RS9_GEOTN</name>
<proteinExistence type="inferred from homology"/>
<keyword id="KW-0687">Ribonucleoprotein</keyword>
<keyword id="KW-0689">Ribosomal protein</keyword>
<dbReference type="EMBL" id="CP000557">
    <property type="protein sequence ID" value="ABO65525.1"/>
    <property type="molecule type" value="Genomic_DNA"/>
</dbReference>
<dbReference type="RefSeq" id="WP_008881911.1">
    <property type="nucleotide sequence ID" value="NC_009328.1"/>
</dbReference>
<dbReference type="SMR" id="A4IJM1"/>
<dbReference type="GeneID" id="87622292"/>
<dbReference type="KEGG" id="gtn:GTNG_0138"/>
<dbReference type="eggNOG" id="COG0103">
    <property type="taxonomic scope" value="Bacteria"/>
</dbReference>
<dbReference type="HOGENOM" id="CLU_046483_2_1_9"/>
<dbReference type="Proteomes" id="UP000001578">
    <property type="component" value="Chromosome"/>
</dbReference>
<dbReference type="GO" id="GO:0022627">
    <property type="term" value="C:cytosolic small ribosomal subunit"/>
    <property type="evidence" value="ECO:0007669"/>
    <property type="project" value="TreeGrafter"/>
</dbReference>
<dbReference type="GO" id="GO:0003723">
    <property type="term" value="F:RNA binding"/>
    <property type="evidence" value="ECO:0007669"/>
    <property type="project" value="TreeGrafter"/>
</dbReference>
<dbReference type="GO" id="GO:0003735">
    <property type="term" value="F:structural constituent of ribosome"/>
    <property type="evidence" value="ECO:0007669"/>
    <property type="project" value="InterPro"/>
</dbReference>
<dbReference type="GO" id="GO:0006412">
    <property type="term" value="P:translation"/>
    <property type="evidence" value="ECO:0007669"/>
    <property type="project" value="UniProtKB-UniRule"/>
</dbReference>
<dbReference type="FunFam" id="3.30.230.10:FF:000001">
    <property type="entry name" value="30S ribosomal protein S9"/>
    <property type="match status" value="1"/>
</dbReference>
<dbReference type="Gene3D" id="3.30.230.10">
    <property type="match status" value="1"/>
</dbReference>
<dbReference type="HAMAP" id="MF_00532_B">
    <property type="entry name" value="Ribosomal_uS9_B"/>
    <property type="match status" value="1"/>
</dbReference>
<dbReference type="InterPro" id="IPR020568">
    <property type="entry name" value="Ribosomal_Su5_D2-typ_SF"/>
</dbReference>
<dbReference type="InterPro" id="IPR000754">
    <property type="entry name" value="Ribosomal_uS9"/>
</dbReference>
<dbReference type="InterPro" id="IPR023035">
    <property type="entry name" value="Ribosomal_uS9_bac/plastid"/>
</dbReference>
<dbReference type="InterPro" id="IPR020574">
    <property type="entry name" value="Ribosomal_uS9_CS"/>
</dbReference>
<dbReference type="InterPro" id="IPR014721">
    <property type="entry name" value="Ribsml_uS5_D2-typ_fold_subgr"/>
</dbReference>
<dbReference type="NCBIfam" id="NF001099">
    <property type="entry name" value="PRK00132.1"/>
    <property type="match status" value="1"/>
</dbReference>
<dbReference type="PANTHER" id="PTHR21569">
    <property type="entry name" value="RIBOSOMAL PROTEIN S9"/>
    <property type="match status" value="1"/>
</dbReference>
<dbReference type="PANTHER" id="PTHR21569:SF1">
    <property type="entry name" value="SMALL RIBOSOMAL SUBUNIT PROTEIN US9M"/>
    <property type="match status" value="1"/>
</dbReference>
<dbReference type="Pfam" id="PF00380">
    <property type="entry name" value="Ribosomal_S9"/>
    <property type="match status" value="1"/>
</dbReference>
<dbReference type="SUPFAM" id="SSF54211">
    <property type="entry name" value="Ribosomal protein S5 domain 2-like"/>
    <property type="match status" value="1"/>
</dbReference>
<dbReference type="PROSITE" id="PS00360">
    <property type="entry name" value="RIBOSOMAL_S9"/>
    <property type="match status" value="1"/>
</dbReference>
<gene>
    <name evidence="1" type="primary">rpsI</name>
    <name type="ordered locus">GTNG_0138</name>
</gene>
<organism>
    <name type="scientific">Geobacillus thermodenitrificans (strain NG80-2)</name>
    <dbReference type="NCBI Taxonomy" id="420246"/>
    <lineage>
        <taxon>Bacteria</taxon>
        <taxon>Bacillati</taxon>
        <taxon>Bacillota</taxon>
        <taxon>Bacilli</taxon>
        <taxon>Bacillales</taxon>
        <taxon>Anoxybacillaceae</taxon>
        <taxon>Geobacillus</taxon>
    </lineage>
</organism>
<evidence type="ECO:0000255" key="1">
    <source>
        <dbReference type="HAMAP-Rule" id="MF_00532"/>
    </source>
</evidence>
<evidence type="ECO:0000305" key="2"/>
<sequence length="130" mass="14437">MAQVQYYGTGRRKSSVARVRLVPGDGRIIVNKHDIREYIPSEALIEMVKQPLVLTETLGSYDVLVNVHGGGFAGQAGAIRHGIARALLEVDPEFRAVLKRAGLLTRDARVKERKKYGLKGARRAPQFSKR</sequence>